<organism>
    <name type="scientific">Anaplasma marginale (strain Florida)</name>
    <dbReference type="NCBI Taxonomy" id="320483"/>
    <lineage>
        <taxon>Bacteria</taxon>
        <taxon>Pseudomonadati</taxon>
        <taxon>Pseudomonadota</taxon>
        <taxon>Alphaproteobacteria</taxon>
        <taxon>Rickettsiales</taxon>
        <taxon>Anaplasmataceae</taxon>
        <taxon>Anaplasma</taxon>
    </lineage>
</organism>
<evidence type="ECO:0000250" key="1"/>
<evidence type="ECO:0000255" key="2">
    <source>
        <dbReference type="HAMAP-Rule" id="MF_00047"/>
    </source>
</evidence>
<gene>
    <name evidence="2" type="primary">ddl</name>
    <name type="ordered locus">AMF_151</name>
</gene>
<name>DDL_ANAMF</name>
<sequence length="334" mass="36433">MPVSLARNAGMLSVAVLCGGSSPEREVSLAGGKRVADALGRLGYNATVLDLNRESVGQLLAMAPDLVYNALHGVQGEDGCVSGLLDILGLACTHSHVAASSVGMDKVLTKHVLKSLGIDFPKFDVLTKEELLSAKEVLPYPFVIKPVRGGSTIGVHAIFSKSEYLDLSAHADTLEDRMIVEEYVSGQEVQTAVFLGRAIGTMELLFEGRIYSYDAKYVEGLCEHIFPANLPYDIYNLTLEWALKLHQCLGCKTLSRVDFRYDVANKALKLLEINTHPGMTVSSTLPEVLWLRCGLNFDHVVDLIVQDALGIDDSRRAYIDELMGKTVSREPSHV</sequence>
<comment type="function">
    <text evidence="2">Cell wall formation.</text>
</comment>
<comment type="catalytic activity">
    <reaction evidence="2">
        <text>2 D-alanine + ATP = D-alanyl-D-alanine + ADP + phosphate + H(+)</text>
        <dbReference type="Rhea" id="RHEA:11224"/>
        <dbReference type="ChEBI" id="CHEBI:15378"/>
        <dbReference type="ChEBI" id="CHEBI:30616"/>
        <dbReference type="ChEBI" id="CHEBI:43474"/>
        <dbReference type="ChEBI" id="CHEBI:57416"/>
        <dbReference type="ChEBI" id="CHEBI:57822"/>
        <dbReference type="ChEBI" id="CHEBI:456216"/>
        <dbReference type="EC" id="6.3.2.4"/>
    </reaction>
</comment>
<comment type="cofactor">
    <cofactor evidence="1">
        <name>Mg(2+)</name>
        <dbReference type="ChEBI" id="CHEBI:18420"/>
    </cofactor>
    <cofactor evidence="1">
        <name>Mn(2+)</name>
        <dbReference type="ChEBI" id="CHEBI:29035"/>
    </cofactor>
    <text evidence="1">Binds 2 magnesium or manganese ions per subunit.</text>
</comment>
<comment type="pathway">
    <text evidence="2">Cell wall biogenesis; peptidoglycan biosynthesis.</text>
</comment>
<comment type="subcellular location">
    <subcellularLocation>
        <location evidence="2">Cytoplasm</location>
    </subcellularLocation>
</comment>
<comment type="similarity">
    <text evidence="2">Belongs to the D-alanine--D-alanine ligase family.</text>
</comment>
<accession>B9KHS3</accession>
<dbReference type="EC" id="6.3.2.4" evidence="2"/>
<dbReference type="EMBL" id="CP001079">
    <property type="protein sequence ID" value="ACM49035.1"/>
    <property type="molecule type" value="Genomic_DNA"/>
</dbReference>
<dbReference type="RefSeq" id="WP_011114164.1">
    <property type="nucleotide sequence ID" value="NZ_AFMS01000157.1"/>
</dbReference>
<dbReference type="SMR" id="B9KHS3"/>
<dbReference type="STRING" id="320483.AMF_151"/>
<dbReference type="GeneID" id="7398609"/>
<dbReference type="KEGG" id="amf:AMF_151"/>
<dbReference type="eggNOG" id="COG1181">
    <property type="taxonomic scope" value="Bacteria"/>
</dbReference>
<dbReference type="HOGENOM" id="CLU_039268_2_0_5"/>
<dbReference type="UniPathway" id="UPA00219"/>
<dbReference type="Proteomes" id="UP000007307">
    <property type="component" value="Chromosome"/>
</dbReference>
<dbReference type="GO" id="GO:0005737">
    <property type="term" value="C:cytoplasm"/>
    <property type="evidence" value="ECO:0007669"/>
    <property type="project" value="UniProtKB-SubCell"/>
</dbReference>
<dbReference type="GO" id="GO:0005524">
    <property type="term" value="F:ATP binding"/>
    <property type="evidence" value="ECO:0007669"/>
    <property type="project" value="UniProtKB-KW"/>
</dbReference>
<dbReference type="GO" id="GO:0008716">
    <property type="term" value="F:D-alanine-D-alanine ligase activity"/>
    <property type="evidence" value="ECO:0007669"/>
    <property type="project" value="UniProtKB-UniRule"/>
</dbReference>
<dbReference type="GO" id="GO:0046872">
    <property type="term" value="F:metal ion binding"/>
    <property type="evidence" value="ECO:0007669"/>
    <property type="project" value="UniProtKB-KW"/>
</dbReference>
<dbReference type="GO" id="GO:0071555">
    <property type="term" value="P:cell wall organization"/>
    <property type="evidence" value="ECO:0007669"/>
    <property type="project" value="UniProtKB-KW"/>
</dbReference>
<dbReference type="GO" id="GO:0009252">
    <property type="term" value="P:peptidoglycan biosynthetic process"/>
    <property type="evidence" value="ECO:0007669"/>
    <property type="project" value="UniProtKB-UniRule"/>
</dbReference>
<dbReference type="GO" id="GO:0008360">
    <property type="term" value="P:regulation of cell shape"/>
    <property type="evidence" value="ECO:0007669"/>
    <property type="project" value="UniProtKB-KW"/>
</dbReference>
<dbReference type="Gene3D" id="3.40.50.20">
    <property type="match status" value="1"/>
</dbReference>
<dbReference type="Gene3D" id="3.30.1490.20">
    <property type="entry name" value="ATP-grasp fold, A domain"/>
    <property type="match status" value="1"/>
</dbReference>
<dbReference type="Gene3D" id="3.30.470.20">
    <property type="entry name" value="ATP-grasp fold, B domain"/>
    <property type="match status" value="1"/>
</dbReference>
<dbReference type="HAMAP" id="MF_00047">
    <property type="entry name" value="Dala_Dala_lig"/>
    <property type="match status" value="1"/>
</dbReference>
<dbReference type="InterPro" id="IPR011761">
    <property type="entry name" value="ATP-grasp"/>
</dbReference>
<dbReference type="InterPro" id="IPR013815">
    <property type="entry name" value="ATP_grasp_subdomain_1"/>
</dbReference>
<dbReference type="InterPro" id="IPR000291">
    <property type="entry name" value="D-Ala_lig_Van_CS"/>
</dbReference>
<dbReference type="InterPro" id="IPR005905">
    <property type="entry name" value="D_ala_D_ala"/>
</dbReference>
<dbReference type="InterPro" id="IPR011095">
    <property type="entry name" value="Dala_Dala_lig_C"/>
</dbReference>
<dbReference type="InterPro" id="IPR016185">
    <property type="entry name" value="PreATP-grasp_dom_sf"/>
</dbReference>
<dbReference type="NCBIfam" id="NF002378">
    <property type="entry name" value="PRK01372.1"/>
    <property type="match status" value="1"/>
</dbReference>
<dbReference type="PANTHER" id="PTHR23132">
    <property type="entry name" value="D-ALANINE--D-ALANINE LIGASE"/>
    <property type="match status" value="1"/>
</dbReference>
<dbReference type="PANTHER" id="PTHR23132:SF23">
    <property type="entry name" value="D-ALANINE--D-ALANINE LIGASE B"/>
    <property type="match status" value="1"/>
</dbReference>
<dbReference type="Pfam" id="PF07478">
    <property type="entry name" value="Dala_Dala_lig_C"/>
    <property type="match status" value="1"/>
</dbReference>
<dbReference type="PIRSF" id="PIRSF039102">
    <property type="entry name" value="Ddl/VanB"/>
    <property type="match status" value="1"/>
</dbReference>
<dbReference type="SUPFAM" id="SSF56059">
    <property type="entry name" value="Glutathione synthetase ATP-binding domain-like"/>
    <property type="match status" value="1"/>
</dbReference>
<dbReference type="SUPFAM" id="SSF52440">
    <property type="entry name" value="PreATP-grasp domain"/>
    <property type="match status" value="1"/>
</dbReference>
<dbReference type="PROSITE" id="PS50975">
    <property type="entry name" value="ATP_GRASP"/>
    <property type="match status" value="1"/>
</dbReference>
<dbReference type="PROSITE" id="PS00843">
    <property type="entry name" value="DALA_DALA_LIGASE_1"/>
    <property type="match status" value="1"/>
</dbReference>
<protein>
    <recommendedName>
        <fullName evidence="2">D-alanine--D-alanine ligase</fullName>
        <ecNumber evidence="2">6.3.2.4</ecNumber>
    </recommendedName>
    <alternativeName>
        <fullName evidence="2">D-Ala-D-Ala ligase</fullName>
    </alternativeName>
    <alternativeName>
        <fullName evidence="2">D-alanylalanine synthetase</fullName>
    </alternativeName>
</protein>
<proteinExistence type="inferred from homology"/>
<feature type="chain" id="PRO_1000117444" description="D-alanine--D-alanine ligase">
    <location>
        <begin position="1"/>
        <end position="334"/>
    </location>
</feature>
<feature type="domain" description="ATP-grasp" evidence="2">
    <location>
        <begin position="110"/>
        <end position="306"/>
    </location>
</feature>
<feature type="binding site" evidence="2">
    <location>
        <begin position="138"/>
        <end position="190"/>
    </location>
    <ligand>
        <name>ATP</name>
        <dbReference type="ChEBI" id="CHEBI:30616"/>
    </ligand>
</feature>
<feature type="binding site" evidence="2">
    <location>
        <position position="258"/>
    </location>
    <ligand>
        <name>Mg(2+)</name>
        <dbReference type="ChEBI" id="CHEBI:18420"/>
        <label>1</label>
    </ligand>
</feature>
<feature type="binding site" evidence="2">
    <location>
        <position position="272"/>
    </location>
    <ligand>
        <name>Mg(2+)</name>
        <dbReference type="ChEBI" id="CHEBI:18420"/>
        <label>1</label>
    </ligand>
</feature>
<feature type="binding site" evidence="2">
    <location>
        <position position="272"/>
    </location>
    <ligand>
        <name>Mg(2+)</name>
        <dbReference type="ChEBI" id="CHEBI:18420"/>
        <label>2</label>
    </ligand>
</feature>
<feature type="binding site" evidence="2">
    <location>
        <position position="274"/>
    </location>
    <ligand>
        <name>Mg(2+)</name>
        <dbReference type="ChEBI" id="CHEBI:18420"/>
        <label>2</label>
    </ligand>
</feature>
<reference key="1">
    <citation type="journal article" date="2009" name="BMC Genomics">
        <title>Conservation in the face of diversity: multistrain analysis of an intracellular bacterium.</title>
        <authorList>
            <person name="Dark M.J."/>
            <person name="Herndon D.R."/>
            <person name="Kappmeyer L.S."/>
            <person name="Gonzales M.P."/>
            <person name="Nordeen E."/>
            <person name="Palmer G.H."/>
            <person name="Knowles D.P. Jr."/>
            <person name="Brayton K.A."/>
        </authorList>
    </citation>
    <scope>NUCLEOTIDE SEQUENCE [LARGE SCALE GENOMIC DNA]</scope>
    <source>
        <strain>Florida</strain>
    </source>
</reference>
<keyword id="KW-0067">ATP-binding</keyword>
<keyword id="KW-0133">Cell shape</keyword>
<keyword id="KW-0961">Cell wall biogenesis/degradation</keyword>
<keyword id="KW-0963">Cytoplasm</keyword>
<keyword id="KW-0436">Ligase</keyword>
<keyword id="KW-0460">Magnesium</keyword>
<keyword id="KW-0464">Manganese</keyword>
<keyword id="KW-0479">Metal-binding</keyword>
<keyword id="KW-0547">Nucleotide-binding</keyword>
<keyword id="KW-0573">Peptidoglycan synthesis</keyword>
<keyword id="KW-1185">Reference proteome</keyword>